<gene>
    <name type="primary">SWI3</name>
    <name type="synonym">TYE2</name>
    <name type="ordered locus">YJL176C</name>
    <name type="ORF">J0495</name>
</gene>
<name>SWI3_YEAST</name>
<reference key="1">
    <citation type="journal article" date="1992" name="Cell">
        <title>Characterization of the yeast SWI1, SWI2, and SWI3 genes, which encode a global activator of transcription.</title>
        <authorList>
            <person name="Peterson C.L."/>
            <person name="Herskowitz I."/>
        </authorList>
    </citation>
    <scope>NUCLEOTIDE SEQUENCE [GENOMIC DNA]</scope>
</reference>
<reference key="2">
    <citation type="journal article" date="1993" name="Curr. Genet.">
        <title>Isolation of the TYE2 gene reveals its identity to SWI3 encoding a general transcription factor in Saccharomyces cerevisiae.</title>
        <authorList>
            <person name="Loehning C."/>
            <person name="Rosenbaum C."/>
            <person name="Ciriacy M."/>
        </authorList>
    </citation>
    <scope>NUCLEOTIDE SEQUENCE [GENOMIC DNA]</scope>
</reference>
<reference key="3">
    <citation type="journal article" date="1996" name="EMBO J.">
        <title>Complete nucleotide sequence of Saccharomyces cerevisiae chromosome X.</title>
        <authorList>
            <person name="Galibert F."/>
            <person name="Alexandraki D."/>
            <person name="Baur A."/>
            <person name="Boles E."/>
            <person name="Chalwatzis N."/>
            <person name="Chuat J.-C."/>
            <person name="Coster F."/>
            <person name="Cziepluch C."/>
            <person name="de Haan M."/>
            <person name="Domdey H."/>
            <person name="Durand P."/>
            <person name="Entian K.-D."/>
            <person name="Gatius M."/>
            <person name="Goffeau A."/>
            <person name="Grivell L.A."/>
            <person name="Hennemann A."/>
            <person name="Herbert C.J."/>
            <person name="Heumann K."/>
            <person name="Hilger F."/>
            <person name="Hollenberg C.P."/>
            <person name="Huang M.-E."/>
            <person name="Jacq C."/>
            <person name="Jauniaux J.-C."/>
            <person name="Katsoulou C."/>
            <person name="Kirchrath L."/>
            <person name="Kleine K."/>
            <person name="Kordes E."/>
            <person name="Koetter P."/>
            <person name="Liebl S."/>
            <person name="Louis E.J."/>
            <person name="Manus V."/>
            <person name="Mewes H.-W."/>
            <person name="Miosga T."/>
            <person name="Obermaier B."/>
            <person name="Perea J."/>
            <person name="Pohl T.M."/>
            <person name="Portetelle D."/>
            <person name="Pujol A."/>
            <person name="Purnelle B."/>
            <person name="Ramezani Rad M."/>
            <person name="Rasmussen S.W."/>
            <person name="Rose M."/>
            <person name="Rossau R."/>
            <person name="Schaaff-Gerstenschlaeger I."/>
            <person name="Smits P.H.M."/>
            <person name="Scarcez T."/>
            <person name="Soriano N."/>
            <person name="To Van D."/>
            <person name="Tzermia M."/>
            <person name="Van Broekhoven A."/>
            <person name="Vandenbol M."/>
            <person name="Wedler H."/>
            <person name="von Wettstein D."/>
            <person name="Wambutt R."/>
            <person name="Zagulski M."/>
            <person name="Zollner A."/>
            <person name="Karpfinger-Hartl L."/>
        </authorList>
    </citation>
    <scope>NUCLEOTIDE SEQUENCE [LARGE SCALE GENOMIC DNA]</scope>
    <source>
        <strain>ATCC 204508 / S288c</strain>
    </source>
</reference>
<reference key="4">
    <citation type="journal article" date="2014" name="G3 (Bethesda)">
        <title>The reference genome sequence of Saccharomyces cerevisiae: Then and now.</title>
        <authorList>
            <person name="Engel S.R."/>
            <person name="Dietrich F.S."/>
            <person name="Fisk D.G."/>
            <person name="Binkley G."/>
            <person name="Balakrishnan R."/>
            <person name="Costanzo M.C."/>
            <person name="Dwight S.S."/>
            <person name="Hitz B.C."/>
            <person name="Karra K."/>
            <person name="Nash R.S."/>
            <person name="Weng S."/>
            <person name="Wong E.D."/>
            <person name="Lloyd P."/>
            <person name="Skrzypek M.S."/>
            <person name="Miyasato S.R."/>
            <person name="Simison M."/>
            <person name="Cherry J.M."/>
        </authorList>
    </citation>
    <scope>GENOME REANNOTATION</scope>
    <source>
        <strain>ATCC 204508 / S288c</strain>
    </source>
</reference>
<reference key="5">
    <citation type="journal article" date="2003" name="Nature">
        <title>Global analysis of protein expression in yeast.</title>
        <authorList>
            <person name="Ghaemmaghami S."/>
            <person name="Huh W.-K."/>
            <person name="Bower K."/>
            <person name="Howson R.W."/>
            <person name="Belle A."/>
            <person name="Dephoure N."/>
            <person name="O'Shea E.K."/>
            <person name="Weissman J.S."/>
        </authorList>
    </citation>
    <scope>LEVEL OF PROTEIN EXPRESSION [LARGE SCALE ANALYSIS]</scope>
</reference>
<reference key="6">
    <citation type="journal article" date="2008" name="Mol. Cell. Proteomics">
        <title>A multidimensional chromatography technology for in-depth phosphoproteome analysis.</title>
        <authorList>
            <person name="Albuquerque C.P."/>
            <person name="Smolka M.B."/>
            <person name="Payne S.H."/>
            <person name="Bafna V."/>
            <person name="Eng J."/>
            <person name="Zhou H."/>
        </authorList>
    </citation>
    <scope>PHOSPHORYLATION [LARGE SCALE ANALYSIS] AT SER-88; SER-185 AND SER-657</scope>
    <scope>IDENTIFICATION BY MASS SPECTROMETRY [LARGE SCALE ANALYSIS]</scope>
</reference>
<reference key="7">
    <citation type="journal article" date="2009" name="Science">
        <title>Global analysis of Cdk1 substrate phosphorylation sites provides insights into evolution.</title>
        <authorList>
            <person name="Holt L.J."/>
            <person name="Tuch B.B."/>
            <person name="Villen J."/>
            <person name="Johnson A.D."/>
            <person name="Gygi S.P."/>
            <person name="Morgan D.O."/>
        </authorList>
    </citation>
    <scope>PHOSPHORYLATION [LARGE SCALE ANALYSIS] AT THR-235</scope>
    <scope>IDENTIFICATION BY MASS SPECTROMETRY [LARGE SCALE ANALYSIS]</scope>
</reference>
<reference key="8">
    <citation type="journal article" date="2003" name="Nat. Struct. Biol.">
        <title>Structural analysis of the yeast SWI/SNF chromatin remodeling complex.</title>
        <authorList>
            <person name="Smith C.L."/>
            <person name="Horowitz-Scherer R."/>
            <person name="Flanagan J.F."/>
            <person name="Woodcock C.L."/>
            <person name="Peterson C.L."/>
        </authorList>
    </citation>
    <scope>3D-STRUCTURE MODELING OF THE SWI/SNF COMPLEX</scope>
    <scope>ELECTRON MICROSCOPY OF THE SWI/SNF COMPLEX</scope>
</reference>
<reference key="9">
    <citation type="journal article" date="2004" name="Biochem. Soc. Trans.">
        <title>Proteomic analysis of chromatin-modifying complexes in Saccharomyces cerevisiae identifies novel subunits.</title>
        <authorList>
            <person name="Lee K.K."/>
            <person name="Prochasson P."/>
            <person name="Florens L."/>
            <person name="Swanson S.K."/>
            <person name="Washburn M.P."/>
            <person name="Workman J.L."/>
        </authorList>
    </citation>
    <scope>INTERACTION WITH RTT102</scope>
</reference>
<reference key="10">
    <citation type="journal article" date="2006" name="Genetics">
        <title>The RSC chromatin remodeling complex bears an essential fungal-specific protein module with broad functional roles.</title>
        <authorList>
            <person name="Wilson B."/>
            <person name="Erdjument-Bromage H."/>
            <person name="Tempst P."/>
            <person name="Cairns B.R."/>
        </authorList>
    </citation>
    <scope>INTERACTION WITH SWP82</scope>
</reference>
<reference key="11">
    <citation type="journal article" date="2006" name="Proc. Natl. Acad. Sci. U.S.A.">
        <title>Structure and function of the SWIRM domain, a conserved protein module found in chromatin regulatory complexes.</title>
        <authorList>
            <person name="Da G."/>
            <person name="Lenkart J."/>
            <person name="Zhao K."/>
            <person name="Shiekhattar R."/>
            <person name="Cairns B.R."/>
            <person name="Marmorstein R."/>
        </authorList>
    </citation>
    <scope>X-RAY CRYSTALLOGRAPHY (1.4 ANGSTROMS) OF 311-395</scope>
    <scope>MUTAGENESIS OF ASP-374; LYS-383; LYS-387 AND ASN-392</scope>
</reference>
<keyword id="KW-0002">3D-structure</keyword>
<keyword id="KW-0010">Activator</keyword>
<keyword id="KW-0238">DNA-binding</keyword>
<keyword id="KW-0539">Nucleus</keyword>
<keyword id="KW-0597">Phosphoprotein</keyword>
<keyword id="KW-1185">Reference proteome</keyword>
<keyword id="KW-0804">Transcription</keyword>
<keyword id="KW-0805">Transcription regulation</keyword>
<proteinExistence type="evidence at protein level"/>
<feature type="chain" id="PRO_0000197123" description="SWI/SNF complex subunit SWI3">
    <location>
        <begin position="1"/>
        <end position="825"/>
    </location>
</feature>
<feature type="domain" description="SWIRM" evidence="1">
    <location>
        <begin position="305"/>
        <end position="402"/>
    </location>
</feature>
<feature type="domain" description="SANT" evidence="2">
    <location>
        <begin position="522"/>
        <end position="573"/>
    </location>
</feature>
<feature type="region of interest" description="Disordered" evidence="3">
    <location>
        <begin position="1"/>
        <end position="285"/>
    </location>
</feature>
<feature type="region of interest" description="Disordered" evidence="3">
    <location>
        <begin position="464"/>
        <end position="509"/>
    </location>
</feature>
<feature type="region of interest" description="Leucine-zipper">
    <location>
        <begin position="694"/>
        <end position="722"/>
    </location>
</feature>
<feature type="compositionally biased region" description="Polar residues" evidence="3">
    <location>
        <begin position="1"/>
        <end position="13"/>
    </location>
</feature>
<feature type="compositionally biased region" description="Low complexity" evidence="3">
    <location>
        <begin position="22"/>
        <end position="42"/>
    </location>
</feature>
<feature type="compositionally biased region" description="Polar residues" evidence="3">
    <location>
        <begin position="74"/>
        <end position="104"/>
    </location>
</feature>
<feature type="compositionally biased region" description="Polar residues" evidence="3">
    <location>
        <begin position="117"/>
        <end position="138"/>
    </location>
</feature>
<feature type="compositionally biased region" description="Basic and acidic residues" evidence="3">
    <location>
        <begin position="159"/>
        <end position="169"/>
    </location>
</feature>
<feature type="compositionally biased region" description="Basic and acidic residues" evidence="3">
    <location>
        <begin position="180"/>
        <end position="194"/>
    </location>
</feature>
<feature type="compositionally biased region" description="Acidic residues" evidence="3">
    <location>
        <begin position="195"/>
        <end position="206"/>
    </location>
</feature>
<feature type="compositionally biased region" description="Polar residues" evidence="3">
    <location>
        <begin position="224"/>
        <end position="237"/>
    </location>
</feature>
<feature type="compositionally biased region" description="Basic and acidic residues" evidence="3">
    <location>
        <begin position="240"/>
        <end position="280"/>
    </location>
</feature>
<feature type="modified residue" description="Phosphoserine" evidence="8">
    <location>
        <position position="88"/>
    </location>
</feature>
<feature type="modified residue" description="Phosphoserine" evidence="8">
    <location>
        <position position="185"/>
    </location>
</feature>
<feature type="modified residue" description="Phosphothreonine" evidence="9">
    <location>
        <position position="235"/>
    </location>
</feature>
<feature type="modified residue" description="Phosphoserine" evidence="8">
    <location>
        <position position="657"/>
    </location>
</feature>
<feature type="mutagenesis site" description="Loss of DNA-binding." evidence="7">
    <original>D</original>
    <variation>A</variation>
    <location>
        <position position="374"/>
    </location>
</feature>
<feature type="mutagenesis site" description="Loss of DNA-binding; when associated with D-387." evidence="7">
    <original>K</original>
    <variation>D</variation>
    <location>
        <position position="383"/>
    </location>
</feature>
<feature type="mutagenesis site" description="Loss of DNA-binding; when associated with D-383." evidence="7">
    <original>K</original>
    <variation>D</variation>
    <location>
        <position position="387"/>
    </location>
</feature>
<feature type="mutagenesis site" description="Loss of DNA-binding." evidence="7">
    <original>N</original>
    <variation>A</variation>
    <location>
        <position position="392"/>
    </location>
</feature>
<feature type="helix" evidence="11">
    <location>
        <begin position="309"/>
        <end position="311"/>
    </location>
</feature>
<feature type="helix" evidence="10">
    <location>
        <begin position="321"/>
        <end position="326"/>
    </location>
</feature>
<feature type="helix" evidence="10">
    <location>
        <begin position="328"/>
        <end position="330"/>
    </location>
</feature>
<feature type="strand" evidence="11">
    <location>
        <begin position="332"/>
        <end position="335"/>
    </location>
</feature>
<feature type="strand" evidence="12">
    <location>
        <begin position="336"/>
        <end position="338"/>
    </location>
</feature>
<feature type="helix" evidence="10">
    <location>
        <begin position="340"/>
        <end position="356"/>
    </location>
</feature>
<feature type="helix" evidence="10">
    <location>
        <begin position="364"/>
        <end position="370"/>
    </location>
</feature>
<feature type="helix" evidence="10">
    <location>
        <begin position="375"/>
        <end position="387"/>
    </location>
</feature>
<feature type="strand" evidence="10">
    <location>
        <begin position="390"/>
        <end position="393"/>
    </location>
</feature>
<feature type="strand" evidence="12">
    <location>
        <begin position="414"/>
        <end position="417"/>
    </location>
</feature>
<feature type="helix" evidence="12">
    <location>
        <begin position="420"/>
        <end position="422"/>
    </location>
</feature>
<feature type="helix" evidence="12">
    <location>
        <begin position="438"/>
        <end position="443"/>
    </location>
</feature>
<feature type="strand" evidence="12">
    <location>
        <begin position="446"/>
        <end position="448"/>
    </location>
</feature>
<feature type="helix" evidence="12">
    <location>
        <begin position="452"/>
        <end position="467"/>
    </location>
</feature>
<feature type="helix" evidence="12">
    <location>
        <begin position="519"/>
        <end position="521"/>
    </location>
</feature>
<feature type="helix" evidence="12">
    <location>
        <begin position="529"/>
        <end position="541"/>
    </location>
</feature>
<feature type="strand" evidence="12">
    <location>
        <begin position="542"/>
        <end position="544"/>
    </location>
</feature>
<feature type="helix" evidence="12">
    <location>
        <begin position="546"/>
        <end position="553"/>
    </location>
</feature>
<feature type="helix" evidence="12">
    <location>
        <begin position="558"/>
        <end position="567"/>
    </location>
</feature>
<feature type="turn" evidence="12">
    <location>
        <begin position="572"/>
        <end position="574"/>
    </location>
</feature>
<feature type="helix" evidence="12">
    <location>
        <begin position="590"/>
        <end position="594"/>
    </location>
</feature>
<feature type="turn" evidence="12">
    <location>
        <begin position="602"/>
        <end position="604"/>
    </location>
</feature>
<feature type="helix" evidence="12">
    <location>
        <begin position="606"/>
        <end position="614"/>
    </location>
</feature>
<feature type="turn" evidence="12">
    <location>
        <begin position="615"/>
        <end position="617"/>
    </location>
</feature>
<feature type="helix" evidence="12">
    <location>
        <begin position="620"/>
        <end position="639"/>
    </location>
</feature>
<feature type="helix" evidence="12">
    <location>
        <begin position="641"/>
        <end position="644"/>
    </location>
</feature>
<feature type="helix" evidence="12">
    <location>
        <begin position="649"/>
        <end position="665"/>
    </location>
</feature>
<feature type="turn" evidence="12">
    <location>
        <begin position="668"/>
        <end position="670"/>
    </location>
</feature>
<feature type="helix" evidence="12">
    <location>
        <begin position="674"/>
        <end position="740"/>
    </location>
</feature>
<feature type="helix" evidence="12">
    <location>
        <begin position="743"/>
        <end position="746"/>
    </location>
</feature>
<feature type="helix" evidence="12">
    <location>
        <begin position="762"/>
        <end position="775"/>
    </location>
</feature>
<feature type="strand" evidence="12">
    <location>
        <begin position="781"/>
        <end position="784"/>
    </location>
</feature>
<evidence type="ECO:0000255" key="1">
    <source>
        <dbReference type="PROSITE-ProRule" id="PRU00247"/>
    </source>
</evidence>
<evidence type="ECO:0000255" key="2">
    <source>
        <dbReference type="PROSITE-ProRule" id="PRU00624"/>
    </source>
</evidence>
<evidence type="ECO:0000256" key="3">
    <source>
        <dbReference type="SAM" id="MobiDB-lite"/>
    </source>
</evidence>
<evidence type="ECO:0000269" key="4">
    <source>
    </source>
</evidence>
<evidence type="ECO:0000269" key="5">
    <source>
    </source>
</evidence>
<evidence type="ECO:0000269" key="6">
    <source>
    </source>
</evidence>
<evidence type="ECO:0000269" key="7">
    <source>
    </source>
</evidence>
<evidence type="ECO:0007744" key="8">
    <source>
    </source>
</evidence>
<evidence type="ECO:0007744" key="9">
    <source>
    </source>
</evidence>
<evidence type="ECO:0007829" key="10">
    <source>
        <dbReference type="PDB" id="2FQ3"/>
    </source>
</evidence>
<evidence type="ECO:0007829" key="11">
    <source>
        <dbReference type="PDB" id="6L9J"/>
    </source>
</evidence>
<evidence type="ECO:0007829" key="12">
    <source>
        <dbReference type="PDB" id="7C4J"/>
    </source>
</evidence>
<dbReference type="EMBL" id="M84390">
    <property type="protein sequence ID" value="AAA35136.1"/>
    <property type="molecule type" value="Genomic_DNA"/>
</dbReference>
<dbReference type="EMBL" id="X56792">
    <property type="protein sequence ID" value="CAA40112.1"/>
    <property type="molecule type" value="Genomic_DNA"/>
</dbReference>
<dbReference type="EMBL" id="Z49451">
    <property type="protein sequence ID" value="CAA89470.1"/>
    <property type="molecule type" value="Genomic_DNA"/>
</dbReference>
<dbReference type="EMBL" id="BK006943">
    <property type="protein sequence ID" value="DAA08629.1"/>
    <property type="molecule type" value="Genomic_DNA"/>
</dbReference>
<dbReference type="PIR" id="S26706">
    <property type="entry name" value="S26706"/>
</dbReference>
<dbReference type="RefSeq" id="NP_012359.1">
    <property type="nucleotide sequence ID" value="NM_001181609.1"/>
</dbReference>
<dbReference type="PDB" id="2FQ3">
    <property type="method" value="X-ray"/>
    <property type="resolution" value="1.40 A"/>
    <property type="chains" value="A=309-398"/>
</dbReference>
<dbReference type="PDB" id="6L9J">
    <property type="method" value="X-ray"/>
    <property type="resolution" value="2.64 A"/>
    <property type="chains" value="B/C/E/F/H/I/K/L=212-398"/>
</dbReference>
<dbReference type="PDB" id="6UXV">
    <property type="method" value="EM"/>
    <property type="resolution" value="4.70 A"/>
    <property type="chains" value="D/E/F/G=1-825"/>
</dbReference>
<dbReference type="PDB" id="6UXW">
    <property type="method" value="EM"/>
    <property type="resolution" value="8.96 A"/>
    <property type="chains" value="D/E/F/G=1-825"/>
</dbReference>
<dbReference type="PDB" id="7C4J">
    <property type="method" value="EM"/>
    <property type="resolution" value="2.89 A"/>
    <property type="chains" value="B/D=1-825"/>
</dbReference>
<dbReference type="PDB" id="7EGM">
    <property type="method" value="EM"/>
    <property type="resolution" value="3.60 A"/>
    <property type="chains" value="D/E=1-825"/>
</dbReference>
<dbReference type="PDB" id="7EGP">
    <property type="method" value="EM"/>
    <property type="resolution" value="6.90 A"/>
    <property type="chains" value="D/E=1-825"/>
</dbReference>
<dbReference type="PDBsum" id="2FQ3"/>
<dbReference type="PDBsum" id="6L9J"/>
<dbReference type="PDBsum" id="6UXV"/>
<dbReference type="PDBsum" id="6UXW"/>
<dbReference type="PDBsum" id="7C4J"/>
<dbReference type="PDBsum" id="7EGM"/>
<dbReference type="PDBsum" id="7EGP"/>
<dbReference type="EMDB" id="EMD-20933"/>
<dbReference type="EMDB" id="EMD-20934"/>
<dbReference type="EMDB" id="EMD-30285"/>
<dbReference type="EMDB" id="EMD-31136"/>
<dbReference type="EMDB" id="EMD-31137"/>
<dbReference type="SMR" id="P32591"/>
<dbReference type="BioGRID" id="33585">
    <property type="interactions" value="429"/>
</dbReference>
<dbReference type="ComplexPortal" id="CPX-1150">
    <property type="entry name" value="SWI/SNF chromatin remodelling complex"/>
</dbReference>
<dbReference type="DIP" id="DIP-2471N"/>
<dbReference type="FunCoup" id="P32591">
    <property type="interactions" value="1260"/>
</dbReference>
<dbReference type="IntAct" id="P32591">
    <property type="interactions" value="54"/>
</dbReference>
<dbReference type="MINT" id="P32591"/>
<dbReference type="STRING" id="4932.YJL176C"/>
<dbReference type="GlyGen" id="P32591">
    <property type="glycosylation" value="1 site, 1 O-linked glycan (1 site)"/>
</dbReference>
<dbReference type="iPTMnet" id="P32591"/>
<dbReference type="PaxDb" id="4932-YJL176C"/>
<dbReference type="PeptideAtlas" id="P32591"/>
<dbReference type="EnsemblFungi" id="YJL176C_mRNA">
    <property type="protein sequence ID" value="YJL176C"/>
    <property type="gene ID" value="YJL176C"/>
</dbReference>
<dbReference type="GeneID" id="853264"/>
<dbReference type="KEGG" id="sce:YJL176C"/>
<dbReference type="AGR" id="SGD:S000003712"/>
<dbReference type="SGD" id="S000003712">
    <property type="gene designation" value="SWI3"/>
</dbReference>
<dbReference type="VEuPathDB" id="FungiDB:YJL176C"/>
<dbReference type="eggNOG" id="KOG1279">
    <property type="taxonomic scope" value="Eukaryota"/>
</dbReference>
<dbReference type="GeneTree" id="ENSGT00940000172343"/>
<dbReference type="HOGENOM" id="CLU_004447_2_3_1"/>
<dbReference type="InParanoid" id="P32591"/>
<dbReference type="OMA" id="FYRYWSA"/>
<dbReference type="OrthoDB" id="118550at2759"/>
<dbReference type="BioCyc" id="YEAST:G3O-31611-MONOMER"/>
<dbReference type="BioGRID-ORCS" id="853264">
    <property type="hits" value="3 hits in 10 CRISPR screens"/>
</dbReference>
<dbReference type="EvolutionaryTrace" id="P32591"/>
<dbReference type="PRO" id="PR:P32591"/>
<dbReference type="Proteomes" id="UP000002311">
    <property type="component" value="Chromosome X"/>
</dbReference>
<dbReference type="RNAct" id="P32591">
    <property type="molecule type" value="protein"/>
</dbReference>
<dbReference type="GO" id="GO:0000785">
    <property type="term" value="C:chromatin"/>
    <property type="evidence" value="ECO:0000303"/>
    <property type="project" value="ComplexPortal"/>
</dbReference>
<dbReference type="GO" id="GO:0005829">
    <property type="term" value="C:cytosol"/>
    <property type="evidence" value="ECO:0000314"/>
    <property type="project" value="SGD"/>
</dbReference>
<dbReference type="GO" id="GO:0005634">
    <property type="term" value="C:nucleus"/>
    <property type="evidence" value="ECO:0000314"/>
    <property type="project" value="SGD"/>
</dbReference>
<dbReference type="GO" id="GO:0016514">
    <property type="term" value="C:SWI/SNF complex"/>
    <property type="evidence" value="ECO:0000314"/>
    <property type="project" value="SGD"/>
</dbReference>
<dbReference type="GO" id="GO:0003677">
    <property type="term" value="F:DNA binding"/>
    <property type="evidence" value="ECO:0000314"/>
    <property type="project" value="SGD"/>
</dbReference>
<dbReference type="GO" id="GO:0042393">
    <property type="term" value="F:histone binding"/>
    <property type="evidence" value="ECO:0000353"/>
    <property type="project" value="SGD"/>
</dbReference>
<dbReference type="GO" id="GO:0006338">
    <property type="term" value="P:chromatin remodeling"/>
    <property type="evidence" value="ECO:0000314"/>
    <property type="project" value="ComplexPortal"/>
</dbReference>
<dbReference type="GO" id="GO:0045893">
    <property type="term" value="P:positive regulation of DNA-templated transcription"/>
    <property type="evidence" value="ECO:0000318"/>
    <property type="project" value="GO_Central"/>
</dbReference>
<dbReference type="GO" id="GO:0031496">
    <property type="term" value="P:positive regulation of mating type switching"/>
    <property type="evidence" value="ECO:0000315"/>
    <property type="project" value="SGD"/>
</dbReference>
<dbReference type="GO" id="GO:0045944">
    <property type="term" value="P:positive regulation of transcription by RNA polymerase II"/>
    <property type="evidence" value="ECO:0000315"/>
    <property type="project" value="SGD"/>
</dbReference>
<dbReference type="GO" id="GO:0006357">
    <property type="term" value="P:regulation of transcription by RNA polymerase II"/>
    <property type="evidence" value="ECO:0000314"/>
    <property type="project" value="ComplexPortal"/>
</dbReference>
<dbReference type="CDD" id="cd00167">
    <property type="entry name" value="SANT"/>
    <property type="match status" value="1"/>
</dbReference>
<dbReference type="FunFam" id="1.10.10.60:FF:000014">
    <property type="entry name" value="SWI/SNF complex subunit SMARCC2 isoform C"/>
    <property type="match status" value="1"/>
</dbReference>
<dbReference type="FunFam" id="1.10.10.10:FF:000020">
    <property type="entry name" value="SWI/SNF complex subunit SMARCC2 isoform c"/>
    <property type="match status" value="1"/>
</dbReference>
<dbReference type="Gene3D" id="1.10.10.60">
    <property type="entry name" value="Homeodomain-like"/>
    <property type="match status" value="1"/>
</dbReference>
<dbReference type="Gene3D" id="1.10.10.10">
    <property type="entry name" value="Winged helix-like DNA-binding domain superfamily/Winged helix DNA-binding domain"/>
    <property type="match status" value="1"/>
</dbReference>
<dbReference type="InterPro" id="IPR009057">
    <property type="entry name" value="Homeodomain-like_sf"/>
</dbReference>
<dbReference type="InterPro" id="IPR001005">
    <property type="entry name" value="SANT/Myb"/>
</dbReference>
<dbReference type="InterPro" id="IPR017884">
    <property type="entry name" value="SANT_dom"/>
</dbReference>
<dbReference type="InterPro" id="IPR032451">
    <property type="entry name" value="SMARCC_C"/>
</dbReference>
<dbReference type="InterPro" id="IPR007526">
    <property type="entry name" value="SWIRM"/>
</dbReference>
<dbReference type="InterPro" id="IPR036388">
    <property type="entry name" value="WH-like_DNA-bd_sf"/>
</dbReference>
<dbReference type="PANTHER" id="PTHR12802:SF41">
    <property type="entry name" value="BRAHMA ASSOCIATED PROTEIN 155 KDA"/>
    <property type="match status" value="1"/>
</dbReference>
<dbReference type="PANTHER" id="PTHR12802">
    <property type="entry name" value="SWI/SNF COMPLEX-RELATED"/>
    <property type="match status" value="1"/>
</dbReference>
<dbReference type="Pfam" id="PF00249">
    <property type="entry name" value="Myb_DNA-binding"/>
    <property type="match status" value="1"/>
</dbReference>
<dbReference type="Pfam" id="PF04433">
    <property type="entry name" value="SWIRM"/>
    <property type="match status" value="1"/>
</dbReference>
<dbReference type="Pfam" id="PF16495">
    <property type="entry name" value="SWIRM-assoc_1"/>
    <property type="match status" value="1"/>
</dbReference>
<dbReference type="SMART" id="SM00717">
    <property type="entry name" value="SANT"/>
    <property type="match status" value="1"/>
</dbReference>
<dbReference type="SUPFAM" id="SSF46689">
    <property type="entry name" value="Homeodomain-like"/>
    <property type="match status" value="2"/>
</dbReference>
<dbReference type="PROSITE" id="PS51293">
    <property type="entry name" value="SANT"/>
    <property type="match status" value="1"/>
</dbReference>
<dbReference type="PROSITE" id="PS50934">
    <property type="entry name" value="SWIRM"/>
    <property type="match status" value="1"/>
</dbReference>
<protein>
    <recommendedName>
        <fullName>SWI/SNF complex subunit SWI3</fullName>
    </recommendedName>
    <alternativeName>
        <fullName>Transcription factor TYE2</fullName>
    </alternativeName>
    <alternativeName>
        <fullName>Transcription regulatory protein SWI3</fullName>
    </alternativeName>
</protein>
<sequence length="825" mass="92926">MENTLGEGSTVNASVDVDQHGNDNNSDSNANAAVAGVANTDTAGEESQQQDESLKDEATVPNTRDAESEAITVTAKQQPTMQANKLDSQETPSTEESRAQNVFGQDNEDSDNLFGETESSVSNNEANTPSIPTNPVDNENNKPAIKEDSTIQDSNGDVKNMEDVKIQKEEEPENNTVIEGVKEESQPDENTKEMDEVEEDDEDDDQPMISPDNSIFGDTKSESKQLGNTSSVANTPSEIPDAHKAEQEDIIEKTESVDKKVDSGEERNEQEREIMNDHSKSANPKKTTITRVEPETFEIPQAHEIVIPSYSKWFNLEKIHSIEVQSLPEFFTNRIPSKTPEVYMRYRNFMVNSYRLNPNEYFSVTTARRNVSGDAAALFRLHKFLTKWGLINYQVDSKLLPKNIEPPLTSQYSTRHDAPRGLFPFESYKPSVQLPDMAKLKKMMNTSDSESTLYKYLKESKRKYDEITHPPSTTDDENGDKNDNGGKMNNEVSTSTSMTGDANLLEEGETSRPLKKVKILEQIDENWSKEDLQKLLKGIQEFGADWYKVAKNVGNKSPEQCILRFLQLPIEDKFLYGDGNGKGDNDNGLGPLKYAPHLPFSKSENPVLSTIAFLVGLVNPKTVQSMTQRAIQSAESIKSQKEEISDQKPIEHIKEGSEIAISSLGYRSHIFATNEERQMNFLTNELIRLQMEKLDAKLNHLKKLEKFMELERKTLERQQENLLIQRLNFNQNSSKIVNVLSKCLNLISDSNINNSSVAEKEEIRSQIDHFKSMLSKPETLSIGKNPFNKPNIETGENHNGQSISNENDVKPISIEAPQFYRYWSA</sequence>
<accession>P32591</accession>
<accession>D6VW13</accession>
<comment type="function">
    <text>Involved in transcriptional activation. Component of the SWI/SNF complex, an ATP-dependent chromatin-remodeling complex, which is required for the positive and negative regulation of gene expression of a large number of genes. It changes chromatin structure by altering DNA-histone contacts within a nucleosome, leading eventually to a change in nucleosome position, thus facilitating or repressing binding of gene-specific transcription factors.</text>
</comment>
<comment type="subunit">
    <text evidence="5 6">Interacts with RTT102, SWP82 and the N-terminus of SNF2. Component of the SWI/SNF global transcription activator complex. The 1.14 MDa SWI/SNF complex is composed of 11 different subunits: one copy each of SWI1, SNF2/SWI2, SNF5, SNF12/SWP73, ARP7/SWP61, ARP9/SWP59; two copies each of SWI3, SNF6, SNF11, SWP82; and three copies of TAF14/SWP29.</text>
</comment>
<comment type="interaction">
    <interactant intactId="EBI-18622">
        <id>P32591</id>
    </interactant>
    <interactant intactId="EBI-23637">
        <id>P53330</id>
        <label>RTT102</label>
    </interactant>
    <organismsDiffer>false</organismsDiffer>
    <experiments>4</experiments>
</comment>
<comment type="interaction">
    <interactant intactId="EBI-18622">
        <id>P32591</id>
    </interactant>
    <interactant intactId="EBI-17526">
        <id>P22082</id>
        <label>SNF2</label>
    </interactant>
    <organismsDiffer>false</organismsDiffer>
    <experiments>10</experiments>
</comment>
<comment type="interaction">
    <interactant intactId="EBI-18622">
        <id>P32591</id>
    </interactant>
    <interactant intactId="EBI-17550">
        <id>P18888</id>
        <label>SNF6</label>
    </interactant>
    <organismsDiffer>false</organismsDiffer>
    <experiments>8</experiments>
</comment>
<comment type="subcellular location">
    <subcellularLocation>
        <location>Nucleus</location>
    </subcellularLocation>
</comment>
<comment type="miscellaneous">
    <text evidence="4">Present with 3150 molecules/cell in log phase SD medium.</text>
</comment>
<organism>
    <name type="scientific">Saccharomyces cerevisiae (strain ATCC 204508 / S288c)</name>
    <name type="common">Baker's yeast</name>
    <dbReference type="NCBI Taxonomy" id="559292"/>
    <lineage>
        <taxon>Eukaryota</taxon>
        <taxon>Fungi</taxon>
        <taxon>Dikarya</taxon>
        <taxon>Ascomycota</taxon>
        <taxon>Saccharomycotina</taxon>
        <taxon>Saccharomycetes</taxon>
        <taxon>Saccharomycetales</taxon>
        <taxon>Saccharomycetaceae</taxon>
        <taxon>Saccharomyces</taxon>
    </lineage>
</organism>